<comment type="subcellular location">
    <subcellularLocation>
        <location evidence="2">Cell membrane</location>
        <topology evidence="2">Multi-pass membrane protein</topology>
    </subcellularLocation>
</comment>
<comment type="similarity">
    <text evidence="2">Belongs to the UPF0700 family.</text>
</comment>
<name>YOAK_BACSU</name>
<proteinExistence type="inferred from homology"/>
<dbReference type="EMBL" id="AF027868">
    <property type="protein sequence ID" value="AAB84449.1"/>
    <property type="molecule type" value="Genomic_DNA"/>
</dbReference>
<dbReference type="EMBL" id="AL009126">
    <property type="protein sequence ID" value="CAB13756.1"/>
    <property type="molecule type" value="Genomic_DNA"/>
</dbReference>
<dbReference type="PIR" id="E69896">
    <property type="entry name" value="E69896"/>
</dbReference>
<dbReference type="RefSeq" id="NP_389745.1">
    <property type="nucleotide sequence ID" value="NC_000964.3"/>
</dbReference>
<dbReference type="RefSeq" id="WP_004399503.1">
    <property type="nucleotide sequence ID" value="NZ_OZ025638.1"/>
</dbReference>
<dbReference type="FunCoup" id="O34343">
    <property type="interactions" value="69"/>
</dbReference>
<dbReference type="STRING" id="224308.BSU18640"/>
<dbReference type="TCDB" id="9.B.143.4.1">
    <property type="family name" value="the 6 tms duf1275/pf06912 (duf1275) family"/>
</dbReference>
<dbReference type="PaxDb" id="224308-BSU18640"/>
<dbReference type="EnsemblBacteria" id="CAB13756">
    <property type="protein sequence ID" value="CAB13756"/>
    <property type="gene ID" value="BSU_18640"/>
</dbReference>
<dbReference type="GeneID" id="940007"/>
<dbReference type="KEGG" id="bsu:BSU18640"/>
<dbReference type="PATRIC" id="fig|224308.179.peg.2032"/>
<dbReference type="eggNOG" id="COG3619">
    <property type="taxonomic scope" value="Bacteria"/>
</dbReference>
<dbReference type="InParanoid" id="O34343"/>
<dbReference type="OrthoDB" id="4272751at2"/>
<dbReference type="PhylomeDB" id="O34343"/>
<dbReference type="BioCyc" id="BSUB:BSU18640-MONOMER"/>
<dbReference type="Proteomes" id="UP000001570">
    <property type="component" value="Chromosome"/>
</dbReference>
<dbReference type="GO" id="GO:0005886">
    <property type="term" value="C:plasma membrane"/>
    <property type="evidence" value="ECO:0007669"/>
    <property type="project" value="UniProtKB-SubCell"/>
</dbReference>
<dbReference type="InterPro" id="IPR010699">
    <property type="entry name" value="DUF1275"/>
</dbReference>
<dbReference type="PANTHER" id="PTHR37314">
    <property type="entry name" value="SLR0142 PROTEIN"/>
    <property type="match status" value="1"/>
</dbReference>
<dbReference type="PANTHER" id="PTHR37314:SF4">
    <property type="entry name" value="UPF0700 TRANSMEMBRANE PROTEIN YOAK"/>
    <property type="match status" value="1"/>
</dbReference>
<dbReference type="Pfam" id="PF06912">
    <property type="entry name" value="DUF1275"/>
    <property type="match status" value="1"/>
</dbReference>
<organism>
    <name type="scientific">Bacillus subtilis (strain 168)</name>
    <dbReference type="NCBI Taxonomy" id="224308"/>
    <lineage>
        <taxon>Bacteria</taxon>
        <taxon>Bacillati</taxon>
        <taxon>Bacillota</taxon>
        <taxon>Bacilli</taxon>
        <taxon>Bacillales</taxon>
        <taxon>Bacillaceae</taxon>
        <taxon>Bacillus</taxon>
    </lineage>
</organism>
<keyword id="KW-1003">Cell membrane</keyword>
<keyword id="KW-0472">Membrane</keyword>
<keyword id="KW-1185">Reference proteome</keyword>
<keyword id="KW-0812">Transmembrane</keyword>
<keyword id="KW-1133">Transmembrane helix</keyword>
<evidence type="ECO:0000255" key="1"/>
<evidence type="ECO:0000305" key="2"/>
<accession>O34343</accession>
<accession>Q796F5</accession>
<gene>
    <name type="primary">yoaK</name>
    <name type="ordered locus">BSU18640</name>
</gene>
<reference key="1">
    <citation type="submission" date="1997-10" db="EMBL/GenBank/DDBJ databases">
        <title>Sequence analysis of the Bacillus subtilis chromosome region between the terC and odhAB loci cloned in a yeast artificial chromosome.</title>
        <authorList>
            <person name="Lapidus A."/>
            <person name="Galleron N."/>
            <person name="Sorokin A."/>
            <person name="Ehrlich S.D."/>
        </authorList>
    </citation>
    <scope>NUCLEOTIDE SEQUENCE [GENOMIC DNA]</scope>
</reference>
<reference key="2">
    <citation type="journal article" date="1997" name="Nature">
        <title>The complete genome sequence of the Gram-positive bacterium Bacillus subtilis.</title>
        <authorList>
            <person name="Kunst F."/>
            <person name="Ogasawara N."/>
            <person name="Moszer I."/>
            <person name="Albertini A.M."/>
            <person name="Alloni G."/>
            <person name="Azevedo V."/>
            <person name="Bertero M.G."/>
            <person name="Bessieres P."/>
            <person name="Bolotin A."/>
            <person name="Borchert S."/>
            <person name="Borriss R."/>
            <person name="Boursier L."/>
            <person name="Brans A."/>
            <person name="Braun M."/>
            <person name="Brignell S.C."/>
            <person name="Bron S."/>
            <person name="Brouillet S."/>
            <person name="Bruschi C.V."/>
            <person name="Caldwell B."/>
            <person name="Capuano V."/>
            <person name="Carter N.M."/>
            <person name="Choi S.-K."/>
            <person name="Codani J.-J."/>
            <person name="Connerton I.F."/>
            <person name="Cummings N.J."/>
            <person name="Daniel R.A."/>
            <person name="Denizot F."/>
            <person name="Devine K.M."/>
            <person name="Duesterhoeft A."/>
            <person name="Ehrlich S.D."/>
            <person name="Emmerson P.T."/>
            <person name="Entian K.-D."/>
            <person name="Errington J."/>
            <person name="Fabret C."/>
            <person name="Ferrari E."/>
            <person name="Foulger D."/>
            <person name="Fritz C."/>
            <person name="Fujita M."/>
            <person name="Fujita Y."/>
            <person name="Fuma S."/>
            <person name="Galizzi A."/>
            <person name="Galleron N."/>
            <person name="Ghim S.-Y."/>
            <person name="Glaser P."/>
            <person name="Goffeau A."/>
            <person name="Golightly E.J."/>
            <person name="Grandi G."/>
            <person name="Guiseppi G."/>
            <person name="Guy B.J."/>
            <person name="Haga K."/>
            <person name="Haiech J."/>
            <person name="Harwood C.R."/>
            <person name="Henaut A."/>
            <person name="Hilbert H."/>
            <person name="Holsappel S."/>
            <person name="Hosono S."/>
            <person name="Hullo M.-F."/>
            <person name="Itaya M."/>
            <person name="Jones L.-M."/>
            <person name="Joris B."/>
            <person name="Karamata D."/>
            <person name="Kasahara Y."/>
            <person name="Klaerr-Blanchard M."/>
            <person name="Klein C."/>
            <person name="Kobayashi Y."/>
            <person name="Koetter P."/>
            <person name="Koningstein G."/>
            <person name="Krogh S."/>
            <person name="Kumano M."/>
            <person name="Kurita K."/>
            <person name="Lapidus A."/>
            <person name="Lardinois S."/>
            <person name="Lauber J."/>
            <person name="Lazarevic V."/>
            <person name="Lee S.-M."/>
            <person name="Levine A."/>
            <person name="Liu H."/>
            <person name="Masuda S."/>
            <person name="Mauel C."/>
            <person name="Medigue C."/>
            <person name="Medina N."/>
            <person name="Mellado R.P."/>
            <person name="Mizuno M."/>
            <person name="Moestl D."/>
            <person name="Nakai S."/>
            <person name="Noback M."/>
            <person name="Noone D."/>
            <person name="O'Reilly M."/>
            <person name="Ogawa K."/>
            <person name="Ogiwara A."/>
            <person name="Oudega B."/>
            <person name="Park S.-H."/>
            <person name="Parro V."/>
            <person name="Pohl T.M."/>
            <person name="Portetelle D."/>
            <person name="Porwollik S."/>
            <person name="Prescott A.M."/>
            <person name="Presecan E."/>
            <person name="Pujic P."/>
            <person name="Purnelle B."/>
            <person name="Rapoport G."/>
            <person name="Rey M."/>
            <person name="Reynolds S."/>
            <person name="Rieger M."/>
            <person name="Rivolta C."/>
            <person name="Rocha E."/>
            <person name="Roche B."/>
            <person name="Rose M."/>
            <person name="Sadaie Y."/>
            <person name="Sato T."/>
            <person name="Scanlan E."/>
            <person name="Schleich S."/>
            <person name="Schroeter R."/>
            <person name="Scoffone F."/>
            <person name="Sekiguchi J."/>
            <person name="Sekowska A."/>
            <person name="Seror S.J."/>
            <person name="Serror P."/>
            <person name="Shin B.-S."/>
            <person name="Soldo B."/>
            <person name="Sorokin A."/>
            <person name="Tacconi E."/>
            <person name="Takagi T."/>
            <person name="Takahashi H."/>
            <person name="Takemaru K."/>
            <person name="Takeuchi M."/>
            <person name="Tamakoshi A."/>
            <person name="Tanaka T."/>
            <person name="Terpstra P."/>
            <person name="Tognoni A."/>
            <person name="Tosato V."/>
            <person name="Uchiyama S."/>
            <person name="Vandenbol M."/>
            <person name="Vannier F."/>
            <person name="Vassarotti A."/>
            <person name="Viari A."/>
            <person name="Wambutt R."/>
            <person name="Wedler E."/>
            <person name="Wedler H."/>
            <person name="Weitzenegger T."/>
            <person name="Winters P."/>
            <person name="Wipat A."/>
            <person name="Yamamoto H."/>
            <person name="Yamane K."/>
            <person name="Yasumoto K."/>
            <person name="Yata K."/>
            <person name="Yoshida K."/>
            <person name="Yoshikawa H.-F."/>
            <person name="Zumstein E."/>
            <person name="Yoshikawa H."/>
            <person name="Danchin A."/>
        </authorList>
    </citation>
    <scope>NUCLEOTIDE SEQUENCE [LARGE SCALE GENOMIC DNA]</scope>
    <source>
        <strain>168</strain>
    </source>
</reference>
<protein>
    <recommendedName>
        <fullName>UPF0700 transmembrane protein YoaK</fullName>
    </recommendedName>
</protein>
<feature type="chain" id="PRO_0000359977" description="UPF0700 transmembrane protein YoaK">
    <location>
        <begin position="1"/>
        <end position="225"/>
    </location>
</feature>
<feature type="transmembrane region" description="Helical" evidence="1">
    <location>
        <begin position="10"/>
        <end position="30"/>
    </location>
</feature>
<feature type="transmembrane region" description="Helical" evidence="1">
    <location>
        <begin position="56"/>
        <end position="76"/>
    </location>
</feature>
<feature type="transmembrane region" description="Helical" evidence="1">
    <location>
        <begin position="99"/>
        <end position="119"/>
    </location>
</feature>
<feature type="transmembrane region" description="Helical" evidence="1">
    <location>
        <begin position="137"/>
        <end position="157"/>
    </location>
</feature>
<feature type="transmembrane region" description="Helical" evidence="1">
    <location>
        <begin position="174"/>
        <end position="194"/>
    </location>
</feature>
<feature type="transmembrane region" description="Helical" evidence="1">
    <location>
        <begin position="197"/>
        <end position="217"/>
    </location>
</feature>
<sequence>MTAAAYRNTLLSLLCLTAGIVDVIGYLSLGHVFTANMTGNIVLLGLAIGKSIQVTVFNSLTALIGFICGVIIATLMVGKAENTLWPSAVTKALALEAFILFVFACLSFYRAFVPVHILIILMSISMGIQTTAAKKLGIAGISSTVLTGTLASLLEDISGRLFFKKQKKTFLRDTVLRALAIILYCVGAIIVALAEPDFYHFIIWVPIVLIFGIMMTAKLKLSGEK</sequence>